<comment type="function">
    <text evidence="1 2">A gamma subtype methylase, recognizes the double-stranded sequence 5'-CTCGAG-3', methylates A-5 on both strands, and protects the DNA from cleavage by the PaeR7I endonuclease.</text>
</comment>
<comment type="catalytic activity">
    <reaction>
        <text>a 2'-deoxyadenosine in DNA + S-adenosyl-L-methionine = an N(6)-methyl-2'-deoxyadenosine in DNA + S-adenosyl-L-homocysteine + H(+)</text>
        <dbReference type="Rhea" id="RHEA:15197"/>
        <dbReference type="Rhea" id="RHEA-COMP:12418"/>
        <dbReference type="Rhea" id="RHEA-COMP:12419"/>
        <dbReference type="ChEBI" id="CHEBI:15378"/>
        <dbReference type="ChEBI" id="CHEBI:57856"/>
        <dbReference type="ChEBI" id="CHEBI:59789"/>
        <dbReference type="ChEBI" id="CHEBI:90615"/>
        <dbReference type="ChEBI" id="CHEBI:90616"/>
        <dbReference type="EC" id="2.1.1.72"/>
    </reaction>
</comment>
<comment type="subunit">
    <text evidence="1">Monomer.</text>
</comment>
<comment type="similarity">
    <text evidence="3">Belongs to the N(4)/N(6)-methyltransferase family.</text>
</comment>
<comment type="sequence caution" evidence="3">
    <conflict type="erroneous initiation">
        <sequence resource="EMBL-CDS" id="CAA27025"/>
    </conflict>
    <text>Truncated N-terminus.</text>
</comment>
<comment type="sequence caution" evidence="3">
    <conflict type="frameshift">
        <sequence resource="EMBL-CDS" id="CAA27025"/>
    </conflict>
</comment>
<gene>
    <name type="primary">paeR7IM</name>
</gene>
<proteinExistence type="evidence at protein level"/>
<evidence type="ECO:0000269" key="1">
    <source>
    </source>
</evidence>
<evidence type="ECO:0000303" key="2">
    <source>
    </source>
</evidence>
<evidence type="ECO:0000305" key="3"/>
<reference key="1">
    <citation type="journal article" date="1985" name="Nucleic Acids Res.">
        <title>Nucleotide sequence of the PaeR7 restriction/modification system and partial characterization of its protein products.</title>
        <authorList>
            <person name="Theriault G."/>
            <person name="Roy P.H."/>
            <person name="Howard K.A."/>
            <person name="Benner J.S."/>
            <person name="Brooks J.E."/>
            <person name="Waters A.F."/>
            <person name="Gingeras T.R."/>
        </authorList>
    </citation>
    <scope>NUCLEOTIDE SEQUENCE [GENOMIC DNA]</scope>
    <scope>FUNCTION AS A MODIFICATION METHYLASE</scope>
    <scope>SUBUNIT</scope>
</reference>
<reference key="2">
    <citation type="journal article" date="2003" name="Nucleic Acids Res.">
        <title>A nomenclature for restriction enzymes, DNA methyltransferases, homing endonucleases and their genes.</title>
        <authorList>
            <person name="Roberts R.J."/>
            <person name="Belfort M."/>
            <person name="Bestor T."/>
            <person name="Bhagwat A.S."/>
            <person name="Bickle T.A."/>
            <person name="Bitinaite J."/>
            <person name="Blumenthal R.M."/>
            <person name="Degtyarev S.K."/>
            <person name="Dryden D.T."/>
            <person name="Dybvig K."/>
            <person name="Firman K."/>
            <person name="Gromova E.S."/>
            <person name="Gumport R.I."/>
            <person name="Halford S.E."/>
            <person name="Hattman S."/>
            <person name="Heitman J."/>
            <person name="Hornby D.P."/>
            <person name="Janulaitis A."/>
            <person name="Jeltsch A."/>
            <person name="Josephsen J."/>
            <person name="Kiss A."/>
            <person name="Klaenhammer T.R."/>
            <person name="Kobayashi I."/>
            <person name="Kong H."/>
            <person name="Krueger D.H."/>
            <person name="Lacks S."/>
            <person name="Marinus M.G."/>
            <person name="Miyahara M."/>
            <person name="Morgan R.D."/>
            <person name="Murray N.E."/>
            <person name="Nagaraja V."/>
            <person name="Piekarowicz A."/>
            <person name="Pingoud A."/>
            <person name="Raleigh E."/>
            <person name="Rao D.N."/>
            <person name="Reich N."/>
            <person name="Repin V.E."/>
            <person name="Selker E.U."/>
            <person name="Shaw P.C."/>
            <person name="Stein D.C."/>
            <person name="Stoddard B.L."/>
            <person name="Szybalski W."/>
            <person name="Trautner T.A."/>
            <person name="Van Etten J.L."/>
            <person name="Vitor J.M."/>
            <person name="Wilson G.G."/>
            <person name="Xu S.Y."/>
        </authorList>
    </citation>
    <scope>NOMENCLATURE</scope>
    <scope>SUBTYPE</scope>
</reference>
<organism>
    <name type="scientific">Pseudomonas aeruginosa</name>
    <dbReference type="NCBI Taxonomy" id="287"/>
    <lineage>
        <taxon>Bacteria</taxon>
        <taxon>Pseudomonadati</taxon>
        <taxon>Pseudomonadota</taxon>
        <taxon>Gammaproteobacteria</taxon>
        <taxon>Pseudomonadales</taxon>
        <taxon>Pseudomonadaceae</taxon>
        <taxon>Pseudomonas</taxon>
    </lineage>
</organism>
<protein>
    <recommendedName>
        <fullName evidence="2">Type II methyltransferase M.PaeR7I</fullName>
        <shortName evidence="2">M.PaeR7I</shortName>
        <ecNumber>2.1.1.72</ecNumber>
    </recommendedName>
    <alternativeName>
        <fullName>Adenine-specific methyltransferase PaeR7I</fullName>
    </alternativeName>
    <alternativeName>
        <fullName>Modification methylase PaeR7I</fullName>
    </alternativeName>
</protein>
<sequence>MAFAPSVAHKPVAAAVCPVMAATEALATEGGLEARGAIFTRSEVVDFILDLAGYTEDQPLHEKRLLEPSFGGGDFLLPIIQRLLSAWRAARPNGTEVDDLGDAIRAVELHHDTFRSTYAAVVALLKREGLSANAATALADRWLSQGDFLLAPLEGQFDFVVGNPPYVRPELIPAPLLAEYRSRYQTMYDRADIYIPFIERSLTALSAGGNLGFICADRWMKNRYGGPLRSLVAERFHLKVYVDMVDTPAFHSDVIAYPAITIISREGGGATRIAHRPSIDRATLTTLAGLLSAPTLPKDAGPVRELARVTNGAEPWLLESSDQMALIRRLEGAFPLLEEAGCKVGIGVATGADKAFIGDFESLDVEPDRKLPLVTTKDIMTGEVQWRGQGVINPFAESGGLVDLGEYPRLRRYLEARRDVIAGRHCAKKAPANWYRTIDRITPALAARPKLLIPDIKGESHIVFEGGELYPSHNLYYVTSDDWDLRALQAVLLSAVSRLFVATYSTKMRGGFLRFQAQYLRRIRIPRWADVPEPLRRELAEAAIKRDVQACNRAVFRLYGLSHEERSALGGNGE</sequence>
<dbReference type="EC" id="2.1.1.72"/>
<dbReference type="EMBL" id="X03274">
    <property type="protein sequence ID" value="CAA27025.1"/>
    <property type="status" value="ALT_SEQ"/>
    <property type="molecule type" value="Genomic_DNA"/>
</dbReference>
<dbReference type="PIR" id="S07366">
    <property type="entry name" value="XYPS7A"/>
</dbReference>
<dbReference type="SMR" id="P05103"/>
<dbReference type="REBASE" id="191894">
    <property type="entry name" value="M.Apa1447ORF1853P"/>
</dbReference>
<dbReference type="REBASE" id="3477">
    <property type="entry name" value="M.PaeR7I"/>
</dbReference>
<dbReference type="REBASE" id="353101">
    <property type="entry name" value="M.LxyHY24ORF1216P"/>
</dbReference>
<dbReference type="PRO" id="PR:P05103"/>
<dbReference type="GO" id="GO:0003677">
    <property type="term" value="F:DNA binding"/>
    <property type="evidence" value="ECO:0007669"/>
    <property type="project" value="UniProtKB-KW"/>
</dbReference>
<dbReference type="GO" id="GO:0009007">
    <property type="term" value="F:site-specific DNA-methyltransferase (adenine-specific) activity"/>
    <property type="evidence" value="ECO:0007669"/>
    <property type="project" value="UniProtKB-EC"/>
</dbReference>
<dbReference type="GO" id="GO:0009307">
    <property type="term" value="P:DNA restriction-modification system"/>
    <property type="evidence" value="ECO:0007669"/>
    <property type="project" value="UniProtKB-KW"/>
</dbReference>
<dbReference type="GO" id="GO:0032259">
    <property type="term" value="P:methylation"/>
    <property type="evidence" value="ECO:0007669"/>
    <property type="project" value="UniProtKB-KW"/>
</dbReference>
<dbReference type="Gene3D" id="3.40.50.150">
    <property type="entry name" value="Vaccinia Virus protein VP39"/>
    <property type="match status" value="1"/>
</dbReference>
<dbReference type="InterPro" id="IPR002052">
    <property type="entry name" value="DNA_methylase_N6_adenine_CS"/>
</dbReference>
<dbReference type="InterPro" id="IPR011639">
    <property type="entry name" value="MethylTrfase_TaqI-like_dom"/>
</dbReference>
<dbReference type="InterPro" id="IPR050953">
    <property type="entry name" value="N4_N6_ade-DNA_methylase"/>
</dbReference>
<dbReference type="InterPro" id="IPR029063">
    <property type="entry name" value="SAM-dependent_MTases_sf"/>
</dbReference>
<dbReference type="PANTHER" id="PTHR33841:SF5">
    <property type="entry name" value="DNA METHYLASE (MODIFICATION METHYLASE) (METHYLTRANSFERASE)-RELATED"/>
    <property type="match status" value="1"/>
</dbReference>
<dbReference type="PANTHER" id="PTHR33841">
    <property type="entry name" value="DNA METHYLTRANSFERASE YEEA-RELATED"/>
    <property type="match status" value="1"/>
</dbReference>
<dbReference type="Pfam" id="PF07669">
    <property type="entry name" value="Eco57I"/>
    <property type="match status" value="1"/>
</dbReference>
<dbReference type="PRINTS" id="PR00507">
    <property type="entry name" value="N12N6MTFRASE"/>
</dbReference>
<dbReference type="SUPFAM" id="SSF53335">
    <property type="entry name" value="S-adenosyl-L-methionine-dependent methyltransferases"/>
    <property type="match status" value="1"/>
</dbReference>
<dbReference type="PROSITE" id="PS00092">
    <property type="entry name" value="N6_MTASE"/>
    <property type="match status" value="1"/>
</dbReference>
<keyword id="KW-0238">DNA-binding</keyword>
<keyword id="KW-0489">Methyltransferase</keyword>
<keyword id="KW-0614">Plasmid</keyword>
<keyword id="KW-0680">Restriction system</keyword>
<keyword id="KW-0949">S-adenosyl-L-methionine</keyword>
<keyword id="KW-0808">Transferase</keyword>
<name>MTP7_PSEAI</name>
<accession>P05103</accession>
<feature type="chain" id="PRO_0000087977" description="Type II methyltransferase M.PaeR7I">
    <location>
        <begin position="1"/>
        <end position="574"/>
    </location>
</feature>
<geneLocation type="plasmid">
    <name>pMG7</name>
</geneLocation>